<dbReference type="EC" id="2.8.1.6" evidence="1"/>
<dbReference type="EMBL" id="CP000777">
    <property type="protein sequence ID" value="ABZ93330.1"/>
    <property type="molecule type" value="Genomic_DNA"/>
</dbReference>
<dbReference type="RefSeq" id="WP_012387840.1">
    <property type="nucleotide sequence ID" value="NC_010842.1"/>
</dbReference>
<dbReference type="SMR" id="B0SDC5"/>
<dbReference type="KEGG" id="lbf:LBF_0798"/>
<dbReference type="HOGENOM" id="CLU_033172_1_2_12"/>
<dbReference type="UniPathway" id="UPA00078">
    <property type="reaction ID" value="UER00162"/>
</dbReference>
<dbReference type="GO" id="GO:0051537">
    <property type="term" value="F:2 iron, 2 sulfur cluster binding"/>
    <property type="evidence" value="ECO:0007669"/>
    <property type="project" value="UniProtKB-KW"/>
</dbReference>
<dbReference type="GO" id="GO:0051539">
    <property type="term" value="F:4 iron, 4 sulfur cluster binding"/>
    <property type="evidence" value="ECO:0007669"/>
    <property type="project" value="UniProtKB-KW"/>
</dbReference>
<dbReference type="GO" id="GO:0004076">
    <property type="term" value="F:biotin synthase activity"/>
    <property type="evidence" value="ECO:0007669"/>
    <property type="project" value="UniProtKB-UniRule"/>
</dbReference>
<dbReference type="GO" id="GO:0005506">
    <property type="term" value="F:iron ion binding"/>
    <property type="evidence" value="ECO:0007669"/>
    <property type="project" value="UniProtKB-UniRule"/>
</dbReference>
<dbReference type="GO" id="GO:0009102">
    <property type="term" value="P:biotin biosynthetic process"/>
    <property type="evidence" value="ECO:0007669"/>
    <property type="project" value="UniProtKB-UniRule"/>
</dbReference>
<dbReference type="CDD" id="cd01335">
    <property type="entry name" value="Radical_SAM"/>
    <property type="match status" value="1"/>
</dbReference>
<dbReference type="FunFam" id="3.20.20.70:FF:000026">
    <property type="entry name" value="Biotin synthase"/>
    <property type="match status" value="1"/>
</dbReference>
<dbReference type="Gene3D" id="3.20.20.70">
    <property type="entry name" value="Aldolase class I"/>
    <property type="match status" value="1"/>
</dbReference>
<dbReference type="HAMAP" id="MF_01694">
    <property type="entry name" value="BioB"/>
    <property type="match status" value="1"/>
</dbReference>
<dbReference type="InterPro" id="IPR013785">
    <property type="entry name" value="Aldolase_TIM"/>
</dbReference>
<dbReference type="InterPro" id="IPR010722">
    <property type="entry name" value="BATS_dom"/>
</dbReference>
<dbReference type="InterPro" id="IPR002684">
    <property type="entry name" value="Biotin_synth/BioAB"/>
</dbReference>
<dbReference type="InterPro" id="IPR024177">
    <property type="entry name" value="Biotin_synthase"/>
</dbReference>
<dbReference type="InterPro" id="IPR006638">
    <property type="entry name" value="Elp3/MiaA/NifB-like_rSAM"/>
</dbReference>
<dbReference type="InterPro" id="IPR007197">
    <property type="entry name" value="rSAM"/>
</dbReference>
<dbReference type="NCBIfam" id="TIGR00433">
    <property type="entry name" value="bioB"/>
    <property type="match status" value="1"/>
</dbReference>
<dbReference type="PANTHER" id="PTHR22976">
    <property type="entry name" value="BIOTIN SYNTHASE"/>
    <property type="match status" value="1"/>
</dbReference>
<dbReference type="PANTHER" id="PTHR22976:SF2">
    <property type="entry name" value="BIOTIN SYNTHASE, MITOCHONDRIAL"/>
    <property type="match status" value="1"/>
</dbReference>
<dbReference type="Pfam" id="PF06968">
    <property type="entry name" value="BATS"/>
    <property type="match status" value="1"/>
</dbReference>
<dbReference type="Pfam" id="PF04055">
    <property type="entry name" value="Radical_SAM"/>
    <property type="match status" value="1"/>
</dbReference>
<dbReference type="PIRSF" id="PIRSF001619">
    <property type="entry name" value="Biotin_synth"/>
    <property type="match status" value="1"/>
</dbReference>
<dbReference type="SFLD" id="SFLDG01060">
    <property type="entry name" value="BATS_domain_containing"/>
    <property type="match status" value="1"/>
</dbReference>
<dbReference type="SFLD" id="SFLDG01278">
    <property type="entry name" value="biotin_synthase_like"/>
    <property type="match status" value="1"/>
</dbReference>
<dbReference type="SMART" id="SM00876">
    <property type="entry name" value="BATS"/>
    <property type="match status" value="1"/>
</dbReference>
<dbReference type="SMART" id="SM00729">
    <property type="entry name" value="Elp3"/>
    <property type="match status" value="1"/>
</dbReference>
<dbReference type="SUPFAM" id="SSF102114">
    <property type="entry name" value="Radical SAM enzymes"/>
    <property type="match status" value="1"/>
</dbReference>
<dbReference type="PROSITE" id="PS51918">
    <property type="entry name" value="RADICAL_SAM"/>
    <property type="match status" value="1"/>
</dbReference>
<comment type="function">
    <text evidence="1">Catalyzes the conversion of dethiobiotin (DTB) to biotin by the insertion of a sulfur atom into dethiobiotin via a radical-based mechanism.</text>
</comment>
<comment type="catalytic activity">
    <reaction evidence="1">
        <text>(4R,5S)-dethiobiotin + (sulfur carrier)-SH + 2 reduced [2Fe-2S]-[ferredoxin] + 2 S-adenosyl-L-methionine = (sulfur carrier)-H + biotin + 2 5'-deoxyadenosine + 2 L-methionine + 2 oxidized [2Fe-2S]-[ferredoxin]</text>
        <dbReference type="Rhea" id="RHEA:22060"/>
        <dbReference type="Rhea" id="RHEA-COMP:10000"/>
        <dbReference type="Rhea" id="RHEA-COMP:10001"/>
        <dbReference type="Rhea" id="RHEA-COMP:14737"/>
        <dbReference type="Rhea" id="RHEA-COMP:14739"/>
        <dbReference type="ChEBI" id="CHEBI:17319"/>
        <dbReference type="ChEBI" id="CHEBI:29917"/>
        <dbReference type="ChEBI" id="CHEBI:33737"/>
        <dbReference type="ChEBI" id="CHEBI:33738"/>
        <dbReference type="ChEBI" id="CHEBI:57586"/>
        <dbReference type="ChEBI" id="CHEBI:57844"/>
        <dbReference type="ChEBI" id="CHEBI:59789"/>
        <dbReference type="ChEBI" id="CHEBI:64428"/>
        <dbReference type="ChEBI" id="CHEBI:149473"/>
        <dbReference type="EC" id="2.8.1.6"/>
    </reaction>
</comment>
<comment type="cofactor">
    <cofactor evidence="1">
        <name>[4Fe-4S] cluster</name>
        <dbReference type="ChEBI" id="CHEBI:49883"/>
    </cofactor>
    <text evidence="1">Binds 1 [4Fe-4S] cluster. The cluster is coordinated with 3 cysteines and an exchangeable S-adenosyl-L-methionine.</text>
</comment>
<comment type="cofactor">
    <cofactor evidence="1">
        <name>[2Fe-2S] cluster</name>
        <dbReference type="ChEBI" id="CHEBI:190135"/>
    </cofactor>
    <text evidence="1">Binds 1 [2Fe-2S] cluster. The cluster is coordinated with 3 cysteines and 1 arginine.</text>
</comment>
<comment type="pathway">
    <text evidence="1">Cofactor biosynthesis; biotin biosynthesis; biotin from 7,8-diaminononanoate: step 2/2.</text>
</comment>
<comment type="subunit">
    <text evidence="1">Homodimer.</text>
</comment>
<comment type="similarity">
    <text evidence="1">Belongs to the radical SAM superfamily. Biotin synthase family.</text>
</comment>
<organism>
    <name type="scientific">Leptospira biflexa serovar Patoc (strain Patoc 1 / Ames)</name>
    <dbReference type="NCBI Taxonomy" id="355278"/>
    <lineage>
        <taxon>Bacteria</taxon>
        <taxon>Pseudomonadati</taxon>
        <taxon>Spirochaetota</taxon>
        <taxon>Spirochaetia</taxon>
        <taxon>Leptospirales</taxon>
        <taxon>Leptospiraceae</taxon>
        <taxon>Leptospira</taxon>
    </lineage>
</organism>
<reference key="1">
    <citation type="journal article" date="2008" name="PLoS ONE">
        <title>Genome sequence of the saprophyte Leptospira biflexa provides insights into the evolution of Leptospira and the pathogenesis of leptospirosis.</title>
        <authorList>
            <person name="Picardeau M."/>
            <person name="Bulach D.M."/>
            <person name="Bouchier C."/>
            <person name="Zuerner R.L."/>
            <person name="Zidane N."/>
            <person name="Wilson P.J."/>
            <person name="Creno S."/>
            <person name="Kuczek E.S."/>
            <person name="Bommezzadri S."/>
            <person name="Davis J.C."/>
            <person name="McGrath A."/>
            <person name="Johnson M.J."/>
            <person name="Boursaux-Eude C."/>
            <person name="Seemann T."/>
            <person name="Rouy Z."/>
            <person name="Coppel R.L."/>
            <person name="Rood J.I."/>
            <person name="Lajus A."/>
            <person name="Davies J.K."/>
            <person name="Medigue C."/>
            <person name="Adler B."/>
        </authorList>
    </citation>
    <scope>NUCLEOTIDE SEQUENCE [LARGE SCALE GENOMIC DNA]</scope>
    <source>
        <strain>Patoc 1 / Ames</strain>
    </source>
</reference>
<sequence length="351" mass="39131">MIAEVQEKTISSSPSIISEEEALQILKGEVPLLPVVAKASEERFRHFGNRVRIHILDNIKNGYCPEDCGYCAQRKGGESGIQEYSLKSPEEIWEDAKKAKENGAYRFCMVTSGRGPTDKAVDKLAETISKINGELGMKVCLSAGILDGKKAKTLKDAGLDRYNHNLNTSESKYNEICSTHTFKDRLTTLEAAKEAEIGLCSGIIVGMGEELKDIVQVAFELKRLGVISIPVNFFIPIKGHAIQKSTLTPEFCVRVLSVFRLVNPDSEIRVGAGREGHLGFLQSMALYVANSLFAEGYLNVKGSEMEQTMNLIRDCNMVPEFTEGIPEGWEDYDSKFLYDEKNFPELYKHKK</sequence>
<keyword id="KW-0001">2Fe-2S</keyword>
<keyword id="KW-0004">4Fe-4S</keyword>
<keyword id="KW-0093">Biotin biosynthesis</keyword>
<keyword id="KW-0408">Iron</keyword>
<keyword id="KW-0411">Iron-sulfur</keyword>
<keyword id="KW-0479">Metal-binding</keyword>
<keyword id="KW-0949">S-adenosyl-L-methionine</keyword>
<keyword id="KW-0808">Transferase</keyword>
<gene>
    <name evidence="1" type="primary">bioB</name>
    <name type="ordered locus">LBF_0798</name>
</gene>
<proteinExistence type="inferred from homology"/>
<name>BIOB_LEPBA</name>
<protein>
    <recommendedName>
        <fullName evidence="1">Biotin synthase</fullName>
        <ecNumber evidence="1">2.8.1.6</ecNumber>
    </recommendedName>
</protein>
<evidence type="ECO:0000255" key="1">
    <source>
        <dbReference type="HAMAP-Rule" id="MF_01694"/>
    </source>
</evidence>
<evidence type="ECO:0000255" key="2">
    <source>
        <dbReference type="PROSITE-ProRule" id="PRU01266"/>
    </source>
</evidence>
<accession>B0SDC5</accession>
<feature type="chain" id="PRO_0000381442" description="Biotin synthase">
    <location>
        <begin position="1"/>
        <end position="351"/>
    </location>
</feature>
<feature type="domain" description="Radical SAM core" evidence="2">
    <location>
        <begin position="49"/>
        <end position="265"/>
    </location>
</feature>
<feature type="binding site" evidence="1">
    <location>
        <position position="64"/>
    </location>
    <ligand>
        <name>[4Fe-4S] cluster</name>
        <dbReference type="ChEBI" id="CHEBI:49883"/>
        <note>4Fe-4S-S-AdoMet</note>
    </ligand>
</feature>
<feature type="binding site" evidence="1">
    <location>
        <position position="68"/>
    </location>
    <ligand>
        <name>[4Fe-4S] cluster</name>
        <dbReference type="ChEBI" id="CHEBI:49883"/>
        <note>4Fe-4S-S-AdoMet</note>
    </ligand>
</feature>
<feature type="binding site" evidence="1">
    <location>
        <position position="71"/>
    </location>
    <ligand>
        <name>[4Fe-4S] cluster</name>
        <dbReference type="ChEBI" id="CHEBI:49883"/>
        <note>4Fe-4S-S-AdoMet</note>
    </ligand>
</feature>
<feature type="binding site" evidence="1">
    <location>
        <position position="108"/>
    </location>
    <ligand>
        <name>[2Fe-2S] cluster</name>
        <dbReference type="ChEBI" id="CHEBI:190135"/>
    </ligand>
</feature>
<feature type="binding site" evidence="1">
    <location>
        <position position="140"/>
    </location>
    <ligand>
        <name>[2Fe-2S] cluster</name>
        <dbReference type="ChEBI" id="CHEBI:190135"/>
    </ligand>
</feature>
<feature type="binding site" evidence="1">
    <location>
        <position position="200"/>
    </location>
    <ligand>
        <name>[2Fe-2S] cluster</name>
        <dbReference type="ChEBI" id="CHEBI:190135"/>
    </ligand>
</feature>
<feature type="binding site" evidence="1">
    <location>
        <position position="269"/>
    </location>
    <ligand>
        <name>[2Fe-2S] cluster</name>
        <dbReference type="ChEBI" id="CHEBI:190135"/>
    </ligand>
</feature>